<comment type="function">
    <text evidence="1">This b-type cytochrome is tightly associated with the reaction center of photosystem II (PSII). PSII is a light-driven water:plastoquinone oxidoreductase that uses light energy to abstract electrons from H(2)O, generating O(2) and a proton gradient subsequently used for ATP formation. It consists of a core antenna complex that captures photons, and an electron transfer chain that converts photonic excitation into a charge separation.</text>
</comment>
<comment type="cofactor">
    <cofactor evidence="1">
        <name>heme b</name>
        <dbReference type="ChEBI" id="CHEBI:60344"/>
    </cofactor>
    <text evidence="1">With its partner (PsbE) binds heme. PSII binds additional chlorophylls, carotenoids and specific lipids.</text>
</comment>
<comment type="subunit">
    <text evidence="1">Heterodimer of an alpha subunit and a beta subunit. PSII is composed of 1 copy each of membrane proteins PsbA, PsbB, PsbC, PsbD, PsbE, PsbF, PsbH, PsbI, PsbJ, PsbK, PsbL, PsbM, PsbT, PsbX, PsbY, PsbZ, Psb30/Ycf12, at least 3 peripheral proteins of the oxygen-evolving complex and a large number of cofactors. It forms dimeric complexes.</text>
</comment>
<comment type="subcellular location">
    <subcellularLocation>
        <location evidence="1">Plastid</location>
        <location evidence="1">Chloroplast thylakoid membrane</location>
        <topology evidence="1">Single-pass membrane protein</topology>
    </subcellularLocation>
</comment>
<comment type="similarity">
    <text evidence="1">Belongs to the PsbE/PsbF family.</text>
</comment>
<keyword id="KW-0150">Chloroplast</keyword>
<keyword id="KW-0249">Electron transport</keyword>
<keyword id="KW-0349">Heme</keyword>
<keyword id="KW-0408">Iron</keyword>
<keyword id="KW-0472">Membrane</keyword>
<keyword id="KW-0479">Metal-binding</keyword>
<keyword id="KW-0602">Photosynthesis</keyword>
<keyword id="KW-0604">Photosystem II</keyword>
<keyword id="KW-0934">Plastid</keyword>
<keyword id="KW-1185">Reference proteome</keyword>
<keyword id="KW-0793">Thylakoid</keyword>
<keyword id="KW-0812">Transmembrane</keyword>
<keyword id="KW-1133">Transmembrane helix</keyword>
<keyword id="KW-0813">Transport</keyword>
<proteinExistence type="inferred from homology"/>
<geneLocation type="chloroplast"/>
<accession>Q7HML6</accession>
<accession>Q3C1L4</accession>
<organism>
    <name type="scientific">Nicotiana sylvestris</name>
    <name type="common">Wood tobacco</name>
    <name type="synonym">South American tobacco</name>
    <dbReference type="NCBI Taxonomy" id="4096"/>
    <lineage>
        <taxon>Eukaryota</taxon>
        <taxon>Viridiplantae</taxon>
        <taxon>Streptophyta</taxon>
        <taxon>Embryophyta</taxon>
        <taxon>Tracheophyta</taxon>
        <taxon>Spermatophyta</taxon>
        <taxon>Magnoliopsida</taxon>
        <taxon>eudicotyledons</taxon>
        <taxon>Gunneridae</taxon>
        <taxon>Pentapetalae</taxon>
        <taxon>asterids</taxon>
        <taxon>lamiids</taxon>
        <taxon>Solanales</taxon>
        <taxon>Solanaceae</taxon>
        <taxon>Nicotianoideae</taxon>
        <taxon>Nicotianeae</taxon>
        <taxon>Nicotiana</taxon>
    </lineage>
</organism>
<reference key="1">
    <citation type="journal article" date="2001" name="EMBO J.">
        <title>Heterologous, splicing-dependent RNA editing in chloroplasts: allotetraploidy provides trans-factors.</title>
        <authorList>
            <person name="Schmitz-Linneweber C."/>
            <person name="Tillich M."/>
            <person name="Herrmann R.G."/>
            <person name="Maier R.M."/>
        </authorList>
    </citation>
    <scope>NUCLEOTIDE SEQUENCE [GENOMIC DNA]</scope>
</reference>
<reference key="2">
    <citation type="journal article" date="2003" name="Mol. Biol. Evol.">
        <title>Identification of RNA editing sites in chloroplast transcripts from the maternal and paternal progenitors of tobacco (Nicotiana tabacum): comparative analysis shows the involvement of distinct trans-factors for ndhB editing.</title>
        <authorList>
            <person name="Sasaki T."/>
            <person name="Yukawa Y."/>
            <person name="Miyamoto T."/>
            <person name="Obokata J."/>
            <person name="Sugiura M."/>
        </authorList>
    </citation>
    <scope>NUCLEOTIDE SEQUENCE [GENOMIC DNA]</scope>
    <source>
        <tissue>Leaf</tissue>
    </source>
</reference>
<reference key="3">
    <citation type="journal article" date="2006" name="Mol. Genet. Genomics">
        <title>The chloroplast genome of Nicotiana sylvestris and Nicotiana tomentosiformis: complete sequencing confirms that the Nicotiana sylvestris progenitor is the maternal genome donor of Nicotiana tabacum.</title>
        <authorList>
            <person name="Yukawa M."/>
            <person name="Tsudzuki T."/>
            <person name="Sugiura M."/>
        </authorList>
    </citation>
    <scope>NUCLEOTIDE SEQUENCE [LARGE SCALE GENOMIC DNA]</scope>
</reference>
<dbReference type="EMBL" id="AJ315332">
    <property type="protein sequence ID" value="CAC51378.1"/>
    <property type="molecule type" value="Genomic_DNA"/>
</dbReference>
<dbReference type="EMBL" id="AB098218">
    <property type="protein sequence ID" value="BAC77555.1"/>
    <property type="molecule type" value="Genomic_DNA"/>
</dbReference>
<dbReference type="EMBL" id="AB237912">
    <property type="protein sequence ID" value="BAE46669.1"/>
    <property type="molecule type" value="Genomic_DNA"/>
</dbReference>
<dbReference type="RefSeq" id="YP_358694.1">
    <property type="nucleotide sequence ID" value="NC_007500.1"/>
</dbReference>
<dbReference type="SMR" id="Q7HML6"/>
<dbReference type="GeneID" id="3735106"/>
<dbReference type="KEGG" id="nsy:3735106"/>
<dbReference type="OrthoDB" id="17641at4085"/>
<dbReference type="Proteomes" id="UP000189701">
    <property type="component" value="Chloroplast Pltd"/>
</dbReference>
<dbReference type="GO" id="GO:0009535">
    <property type="term" value="C:chloroplast thylakoid membrane"/>
    <property type="evidence" value="ECO:0007669"/>
    <property type="project" value="UniProtKB-SubCell"/>
</dbReference>
<dbReference type="GO" id="GO:0009539">
    <property type="term" value="C:photosystem II reaction center"/>
    <property type="evidence" value="ECO:0007669"/>
    <property type="project" value="InterPro"/>
</dbReference>
<dbReference type="GO" id="GO:0009055">
    <property type="term" value="F:electron transfer activity"/>
    <property type="evidence" value="ECO:0007669"/>
    <property type="project" value="UniProtKB-UniRule"/>
</dbReference>
<dbReference type="GO" id="GO:0020037">
    <property type="term" value="F:heme binding"/>
    <property type="evidence" value="ECO:0007669"/>
    <property type="project" value="InterPro"/>
</dbReference>
<dbReference type="GO" id="GO:0005506">
    <property type="term" value="F:iron ion binding"/>
    <property type="evidence" value="ECO:0007669"/>
    <property type="project" value="UniProtKB-UniRule"/>
</dbReference>
<dbReference type="GO" id="GO:0009767">
    <property type="term" value="P:photosynthetic electron transport chain"/>
    <property type="evidence" value="ECO:0007669"/>
    <property type="project" value="InterPro"/>
</dbReference>
<dbReference type="HAMAP" id="MF_00643">
    <property type="entry name" value="PSII_PsbF"/>
    <property type="match status" value="1"/>
</dbReference>
<dbReference type="InterPro" id="IPR006241">
    <property type="entry name" value="PSII_cyt_b559_bsu"/>
</dbReference>
<dbReference type="InterPro" id="IPR006216">
    <property type="entry name" value="PSII_cyt_b559_CS"/>
</dbReference>
<dbReference type="InterPro" id="IPR013081">
    <property type="entry name" value="PSII_cyt_b559_N"/>
</dbReference>
<dbReference type="NCBIfam" id="TIGR01333">
    <property type="entry name" value="cyt_b559_beta"/>
    <property type="match status" value="1"/>
</dbReference>
<dbReference type="Pfam" id="PF00283">
    <property type="entry name" value="Cytochrom_B559"/>
    <property type="match status" value="1"/>
</dbReference>
<dbReference type="PIRSF" id="PIRSF000037">
    <property type="entry name" value="PsbF"/>
    <property type="match status" value="1"/>
</dbReference>
<dbReference type="SUPFAM" id="SSF161045">
    <property type="entry name" value="Cytochrome b559 subunits"/>
    <property type="match status" value="1"/>
</dbReference>
<dbReference type="PROSITE" id="PS00537">
    <property type="entry name" value="CYTOCHROME_B559"/>
    <property type="match status" value="1"/>
</dbReference>
<name>PSBF_NICSY</name>
<feature type="chain" id="PRO_0000200426" description="Cytochrome b559 subunit beta">
    <location>
        <begin position="1"/>
        <end position="39"/>
    </location>
</feature>
<feature type="transmembrane region" description="Helical" evidence="1">
    <location>
        <begin position="14"/>
        <end position="30"/>
    </location>
</feature>
<feature type="binding site" description="axial binding residue" evidence="1">
    <location>
        <position position="18"/>
    </location>
    <ligand>
        <name>heme</name>
        <dbReference type="ChEBI" id="CHEBI:30413"/>
        <note>ligand shared with alpha subunit</note>
    </ligand>
    <ligandPart>
        <name>Fe</name>
        <dbReference type="ChEBI" id="CHEBI:18248"/>
    </ligandPart>
</feature>
<sequence length="39" mass="4484">MTIDRTYPIFTVRWLAVHGLAVPTVFFLGSISAMQFIQR</sequence>
<protein>
    <recommendedName>
        <fullName evidence="1">Cytochrome b559 subunit beta</fullName>
    </recommendedName>
    <alternativeName>
        <fullName evidence="1">PSII reaction center subunit VI</fullName>
    </alternativeName>
</protein>
<gene>
    <name evidence="1" type="primary">psbF</name>
</gene>
<evidence type="ECO:0000255" key="1">
    <source>
        <dbReference type="HAMAP-Rule" id="MF_00643"/>
    </source>
</evidence>